<name>EVA1C_HUMAN</name>
<organism>
    <name type="scientific">Homo sapiens</name>
    <name type="common">Human</name>
    <dbReference type="NCBI Taxonomy" id="9606"/>
    <lineage>
        <taxon>Eukaryota</taxon>
        <taxon>Metazoa</taxon>
        <taxon>Chordata</taxon>
        <taxon>Craniata</taxon>
        <taxon>Vertebrata</taxon>
        <taxon>Euteleostomi</taxon>
        <taxon>Mammalia</taxon>
        <taxon>Eutheria</taxon>
        <taxon>Euarchontoglires</taxon>
        <taxon>Primates</taxon>
        <taxon>Haplorrhini</taxon>
        <taxon>Catarrhini</taxon>
        <taxon>Hominidae</taxon>
        <taxon>Homo</taxon>
    </lineage>
</organism>
<feature type="signal peptide" evidence="1">
    <location>
        <begin position="1"/>
        <end position="48"/>
    </location>
</feature>
<feature type="chain" id="PRO_0000017671" description="Protein eva-1 homolog C">
    <location>
        <begin position="49"/>
        <end position="441"/>
    </location>
</feature>
<feature type="topological domain" description="Extracellular" evidence="1">
    <location>
        <begin position="49"/>
        <end position="322"/>
    </location>
</feature>
<feature type="transmembrane region" description="Helical" evidence="1">
    <location>
        <begin position="323"/>
        <end position="343"/>
    </location>
</feature>
<feature type="topological domain" description="Cytoplasmic" evidence="1">
    <location>
        <begin position="344"/>
        <end position="441"/>
    </location>
</feature>
<feature type="domain" description="SUEL-type lectin 1" evidence="2">
    <location>
        <begin position="67"/>
        <end position="159"/>
    </location>
</feature>
<feature type="domain" description="SUEL-type lectin 2" evidence="2">
    <location>
        <begin position="168"/>
        <end position="260"/>
    </location>
</feature>
<feature type="region of interest" description="Disordered" evidence="3">
    <location>
        <begin position="1"/>
        <end position="23"/>
    </location>
</feature>
<feature type="region of interest" description="Disordered" evidence="3">
    <location>
        <begin position="362"/>
        <end position="390"/>
    </location>
</feature>
<feature type="compositionally biased region" description="Acidic residues" evidence="3">
    <location>
        <begin position="368"/>
        <end position="383"/>
    </location>
</feature>
<feature type="glycosylation site" description="N-linked (GlcNAc...) asparagine" evidence="1">
    <location>
        <position position="62"/>
    </location>
</feature>
<feature type="glycosylation site" description="N-linked (GlcNAc...) asparagine" evidence="1">
    <location>
        <position position="165"/>
    </location>
</feature>
<feature type="splice variant" id="VSP_003103" description="In isoform 2." evidence="5">
    <original>GYLTKLLQNHTTYACD</original>
    <variation>EGAGRMPEPAGLPPPG</variation>
    <location>
        <begin position="54"/>
        <end position="69"/>
    </location>
</feature>
<feature type="splice variant" id="VSP_003104" description="In isoform 2." evidence="5">
    <location>
        <begin position="70"/>
        <end position="441"/>
    </location>
</feature>
<feature type="splice variant" id="VSP_055198" description="In isoform 3." evidence="6">
    <location>
        <begin position="285"/>
        <end position="287"/>
    </location>
</feature>
<feature type="sequence conflict" description="In Ref. 5; AAH38710." evidence="7" ref="5">
    <original>P</original>
    <variation>H</variation>
    <location>
        <position position="19"/>
    </location>
</feature>
<feature type="sequence conflict" description="In Ref. 5; AAH38710." evidence="7" ref="5">
    <location>
        <begin position="284"/>
        <end position="286"/>
    </location>
</feature>
<evidence type="ECO:0000255" key="1"/>
<evidence type="ECO:0000255" key="2">
    <source>
        <dbReference type="PROSITE-ProRule" id="PRU00260"/>
    </source>
</evidence>
<evidence type="ECO:0000256" key="3">
    <source>
        <dbReference type="SAM" id="MobiDB-lite"/>
    </source>
</evidence>
<evidence type="ECO:0000269" key="4">
    <source>
    </source>
</evidence>
<evidence type="ECO:0000303" key="5">
    <source>
    </source>
</evidence>
<evidence type="ECO:0000303" key="6">
    <source>
    </source>
</evidence>
<evidence type="ECO:0000305" key="7"/>
<proteinExistence type="evidence at protein level"/>
<reference key="1">
    <citation type="journal article" date="2001" name="Genomics">
        <title>From PREDs and open reading frames to cDNA isolation: revisiting the human chromosome 21 transcription map.</title>
        <authorList>
            <person name="Reymond A."/>
            <person name="Friedli M."/>
            <person name="Neergaard Henrichsen C."/>
            <person name="Chapot F."/>
            <person name="Deutsch S."/>
            <person name="Ucla C."/>
            <person name="Rossier C."/>
            <person name="Lyle R."/>
            <person name="Guipponi M."/>
            <person name="Antonarakis S.E."/>
        </authorList>
    </citation>
    <scope>NUCLEOTIDE SEQUENCE [MRNA] (ISOFORMS 1 AND 2)</scope>
</reference>
<reference key="2">
    <citation type="journal article" date="2003" name="Genome Res.">
        <title>The secreted protein discovery initiative (SPDI), a large-scale effort to identify novel human secreted and transmembrane proteins: a bioinformatics assessment.</title>
        <authorList>
            <person name="Clark H.F."/>
            <person name="Gurney A.L."/>
            <person name="Abaya E."/>
            <person name="Baker K."/>
            <person name="Baldwin D.T."/>
            <person name="Brush J."/>
            <person name="Chen J."/>
            <person name="Chow B."/>
            <person name="Chui C."/>
            <person name="Crowley C."/>
            <person name="Currell B."/>
            <person name="Deuel B."/>
            <person name="Dowd P."/>
            <person name="Eaton D."/>
            <person name="Foster J.S."/>
            <person name="Grimaldi C."/>
            <person name="Gu Q."/>
            <person name="Hass P.E."/>
            <person name="Heldens S."/>
            <person name="Huang A."/>
            <person name="Kim H.S."/>
            <person name="Klimowski L."/>
            <person name="Jin Y."/>
            <person name="Johnson S."/>
            <person name="Lee J."/>
            <person name="Lewis L."/>
            <person name="Liao D."/>
            <person name="Mark M.R."/>
            <person name="Robbie E."/>
            <person name="Sanchez C."/>
            <person name="Schoenfeld J."/>
            <person name="Seshagiri S."/>
            <person name="Simmons L."/>
            <person name="Singh J."/>
            <person name="Smith V."/>
            <person name="Stinson J."/>
            <person name="Vagts A."/>
            <person name="Vandlen R.L."/>
            <person name="Watanabe C."/>
            <person name="Wieand D."/>
            <person name="Woods K."/>
            <person name="Xie M.-H."/>
            <person name="Yansura D.G."/>
            <person name="Yi S."/>
            <person name="Yu G."/>
            <person name="Yuan J."/>
            <person name="Zhang M."/>
            <person name="Zhang Z."/>
            <person name="Goddard A.D."/>
            <person name="Wood W.I."/>
            <person name="Godowski P.J."/>
            <person name="Gray A.M."/>
        </authorList>
    </citation>
    <scope>NUCLEOTIDE SEQUENCE [LARGE SCALE MRNA] (ISOFORM 1)</scope>
</reference>
<reference key="3">
    <citation type="journal article" date="2000" name="Nature">
        <title>The DNA sequence of human chromosome 21.</title>
        <authorList>
            <person name="Hattori M."/>
            <person name="Fujiyama A."/>
            <person name="Taylor T.D."/>
            <person name="Watanabe H."/>
            <person name="Yada T."/>
            <person name="Park H.-S."/>
            <person name="Toyoda A."/>
            <person name="Ishii K."/>
            <person name="Totoki Y."/>
            <person name="Choi D.-K."/>
            <person name="Groner Y."/>
            <person name="Soeda E."/>
            <person name="Ohki M."/>
            <person name="Takagi T."/>
            <person name="Sakaki Y."/>
            <person name="Taudien S."/>
            <person name="Blechschmidt K."/>
            <person name="Polley A."/>
            <person name="Menzel U."/>
            <person name="Delabar J."/>
            <person name="Kumpf K."/>
            <person name="Lehmann R."/>
            <person name="Patterson D."/>
            <person name="Reichwald K."/>
            <person name="Rump A."/>
            <person name="Schillhabel M."/>
            <person name="Schudy A."/>
            <person name="Zimmermann W."/>
            <person name="Rosenthal A."/>
            <person name="Kudoh J."/>
            <person name="Shibuya K."/>
            <person name="Kawasaki K."/>
            <person name="Asakawa S."/>
            <person name="Shintani A."/>
            <person name="Sasaki T."/>
            <person name="Nagamine K."/>
            <person name="Mitsuyama S."/>
            <person name="Antonarakis S.E."/>
            <person name="Minoshima S."/>
            <person name="Shimizu N."/>
            <person name="Nordsiek G."/>
            <person name="Hornischer K."/>
            <person name="Brandt P."/>
            <person name="Scharfe M."/>
            <person name="Schoen O."/>
            <person name="Desario A."/>
            <person name="Reichelt J."/>
            <person name="Kauer G."/>
            <person name="Bloecker H."/>
            <person name="Ramser J."/>
            <person name="Beck A."/>
            <person name="Klages S."/>
            <person name="Hennig S."/>
            <person name="Riesselmann L."/>
            <person name="Dagand E."/>
            <person name="Wehrmeyer S."/>
            <person name="Borzym K."/>
            <person name="Gardiner K."/>
            <person name="Nizetic D."/>
            <person name="Francis F."/>
            <person name="Lehrach H."/>
            <person name="Reinhardt R."/>
            <person name="Yaspo M.-L."/>
        </authorList>
    </citation>
    <scope>NUCLEOTIDE SEQUENCE [LARGE SCALE GENOMIC DNA]</scope>
</reference>
<reference key="4">
    <citation type="submission" date="2005-09" db="EMBL/GenBank/DDBJ databases">
        <authorList>
            <person name="Mural R.J."/>
            <person name="Istrail S."/>
            <person name="Sutton G.G."/>
            <person name="Florea L."/>
            <person name="Halpern A.L."/>
            <person name="Mobarry C.M."/>
            <person name="Lippert R."/>
            <person name="Walenz B."/>
            <person name="Shatkay H."/>
            <person name="Dew I."/>
            <person name="Miller J.R."/>
            <person name="Flanigan M.J."/>
            <person name="Edwards N.J."/>
            <person name="Bolanos R."/>
            <person name="Fasulo D."/>
            <person name="Halldorsson B.V."/>
            <person name="Hannenhalli S."/>
            <person name="Turner R."/>
            <person name="Yooseph S."/>
            <person name="Lu F."/>
            <person name="Nusskern D.R."/>
            <person name="Shue B.C."/>
            <person name="Zheng X.H."/>
            <person name="Zhong F."/>
            <person name="Delcher A.L."/>
            <person name="Huson D.H."/>
            <person name="Kravitz S.A."/>
            <person name="Mouchard L."/>
            <person name="Reinert K."/>
            <person name="Remington K.A."/>
            <person name="Clark A.G."/>
            <person name="Waterman M.S."/>
            <person name="Eichler E.E."/>
            <person name="Adams M.D."/>
            <person name="Hunkapiller M.W."/>
            <person name="Myers E.W."/>
            <person name="Venter J.C."/>
        </authorList>
    </citation>
    <scope>NUCLEOTIDE SEQUENCE [LARGE SCALE GENOMIC DNA]</scope>
</reference>
<reference key="5">
    <citation type="journal article" date="2004" name="Genome Res.">
        <title>The status, quality, and expansion of the NIH full-length cDNA project: the Mammalian Gene Collection (MGC).</title>
        <authorList>
            <consortium name="The MGC Project Team"/>
        </authorList>
    </citation>
    <scope>NUCLEOTIDE SEQUENCE [LARGE SCALE MRNA] (ISOFORM 3)</scope>
    <source>
        <tissue>Hippocampus</tissue>
    </source>
</reference>
<reference key="6">
    <citation type="journal article" date="2009" name="J. Biochem.">
        <title>Human C21orf63 is a heparin-binding protein.</title>
        <authorList>
            <person name="Mitsunaga K."/>
            <person name="Harada-Itadani J."/>
            <person name="Shikanai T."/>
            <person name="Tateno H."/>
            <person name="Ikehara Y."/>
            <person name="Hirabayashi J."/>
            <person name="Narimatsu H."/>
            <person name="Angata T."/>
        </authorList>
    </citation>
    <scope>TISSUE SPECIFICITY</scope>
    <scope>FUNCTION</scope>
</reference>
<gene>
    <name type="primary">EVA1C</name>
    <name type="synonym">C21orf63</name>
    <name type="synonym">C21orf64</name>
    <name type="synonym">FAM176C</name>
    <name type="ORF">PRED34</name>
    <name type="ORF">UNQ2504/PRO5993</name>
</gene>
<comment type="function">
    <text evidence="4">Binds heparin.</text>
</comment>
<comment type="subcellular location">
    <subcellularLocation>
        <location evidence="7">Membrane</location>
        <topology evidence="7">Single-pass type I membrane protein</topology>
    </subcellularLocation>
</comment>
<comment type="alternative products">
    <event type="alternative splicing"/>
    <isoform>
        <id>P58658-1</id>
        <name>1</name>
        <sequence type="displayed"/>
    </isoform>
    <isoform>
        <id>P58658-2</id>
        <name>2</name>
        <sequence type="described" ref="VSP_003103 VSP_003104"/>
    </isoform>
    <isoform>
        <id>P58658-3</id>
        <name>3</name>
        <sequence type="described" ref="VSP_055198"/>
    </isoform>
</comment>
<comment type="tissue specificity">
    <text evidence="4">Ubiquitous.</text>
</comment>
<comment type="similarity">
    <text evidence="7">Belongs to the EVA1 family.</text>
</comment>
<dbReference type="EMBL" id="AF358258">
    <property type="protein sequence ID" value="AAL40411.1"/>
    <property type="molecule type" value="mRNA"/>
</dbReference>
<dbReference type="EMBL" id="AY040087">
    <property type="protein sequence ID" value="AAK74135.1"/>
    <property type="molecule type" value="mRNA"/>
</dbReference>
<dbReference type="EMBL" id="AY358787">
    <property type="protein sequence ID" value="AAQ89147.1"/>
    <property type="molecule type" value="mRNA"/>
</dbReference>
<dbReference type="EMBL" id="AP000269">
    <property type="status" value="NOT_ANNOTATED_CDS"/>
    <property type="molecule type" value="Genomic_DNA"/>
</dbReference>
<dbReference type="EMBL" id="AP000270">
    <property type="status" value="NOT_ANNOTATED_CDS"/>
    <property type="molecule type" value="Genomic_DNA"/>
</dbReference>
<dbReference type="EMBL" id="AP000271">
    <property type="status" value="NOT_ANNOTATED_CDS"/>
    <property type="molecule type" value="Genomic_DNA"/>
</dbReference>
<dbReference type="EMBL" id="AP000272">
    <property type="status" value="NOT_ANNOTATED_CDS"/>
    <property type="molecule type" value="Genomic_DNA"/>
</dbReference>
<dbReference type="EMBL" id="CH471079">
    <property type="protein sequence ID" value="EAX09872.1"/>
    <property type="molecule type" value="Genomic_DNA"/>
</dbReference>
<dbReference type="EMBL" id="BC038710">
    <property type="protein sequence ID" value="AAH38710.1"/>
    <property type="molecule type" value="mRNA"/>
</dbReference>
<dbReference type="CCDS" id="CCDS13614.1">
    <molecule id="P58658-1"/>
</dbReference>
<dbReference type="CCDS" id="CCDS68186.1">
    <molecule id="P58658-3"/>
</dbReference>
<dbReference type="RefSeq" id="NP_001273485.1">
    <molecule id="P58658-3"/>
    <property type="nucleotide sequence ID" value="NM_001286556.2"/>
</dbReference>
<dbReference type="RefSeq" id="NP_478067.2">
    <molecule id="P58658-1"/>
    <property type="nucleotide sequence ID" value="NM_058187.4"/>
</dbReference>
<dbReference type="SMR" id="P58658"/>
<dbReference type="BioGRID" id="121863">
    <property type="interactions" value="74"/>
</dbReference>
<dbReference type="FunCoup" id="P58658">
    <property type="interactions" value="282"/>
</dbReference>
<dbReference type="IntAct" id="P58658">
    <property type="interactions" value="57"/>
</dbReference>
<dbReference type="STRING" id="9606.ENSP00000300255"/>
<dbReference type="GlyCosmos" id="P58658">
    <property type="glycosylation" value="2 sites, No reported glycans"/>
</dbReference>
<dbReference type="GlyGen" id="P58658">
    <property type="glycosylation" value="2 sites, 1 N-linked glycan (1 site)"/>
</dbReference>
<dbReference type="iPTMnet" id="P58658"/>
<dbReference type="PhosphoSitePlus" id="P58658"/>
<dbReference type="BioMuta" id="EVA1C"/>
<dbReference type="jPOST" id="P58658"/>
<dbReference type="MassIVE" id="P58658"/>
<dbReference type="PaxDb" id="9606-ENSP00000300255"/>
<dbReference type="PeptideAtlas" id="P58658"/>
<dbReference type="ProteomicsDB" id="57094">
    <molecule id="P58658-1"/>
</dbReference>
<dbReference type="ProteomicsDB" id="882"/>
<dbReference type="Antibodypedia" id="2587">
    <property type="antibodies" value="50 antibodies from 12 providers"/>
</dbReference>
<dbReference type="DNASU" id="59271"/>
<dbReference type="Ensembl" id="ENST00000300255.7">
    <molecule id="P58658-1"/>
    <property type="protein sequence ID" value="ENSP00000300255.2"/>
    <property type="gene ID" value="ENSG00000166979.13"/>
</dbReference>
<dbReference type="Ensembl" id="ENST00000382699.7">
    <molecule id="P58658-3"/>
    <property type="protein sequence ID" value="ENSP00000372146.3"/>
    <property type="gene ID" value="ENSG00000166979.13"/>
</dbReference>
<dbReference type="GeneID" id="59271"/>
<dbReference type="KEGG" id="hsa:59271"/>
<dbReference type="MANE-Select" id="ENST00000300255.7">
    <property type="protein sequence ID" value="ENSP00000300255.2"/>
    <property type="RefSeq nucleotide sequence ID" value="NM_058187.5"/>
    <property type="RefSeq protein sequence ID" value="NP_478067.2"/>
</dbReference>
<dbReference type="UCSC" id="uc002ypr.3">
    <molecule id="P58658-1"/>
    <property type="organism name" value="human"/>
</dbReference>
<dbReference type="AGR" id="HGNC:13239"/>
<dbReference type="CTD" id="59271"/>
<dbReference type="DisGeNET" id="59271"/>
<dbReference type="GeneCards" id="EVA1C"/>
<dbReference type="HGNC" id="HGNC:13239">
    <property type="gene designation" value="EVA1C"/>
</dbReference>
<dbReference type="HPA" id="ENSG00000166979">
    <property type="expression patterns" value="Low tissue specificity"/>
</dbReference>
<dbReference type="neXtProt" id="NX_P58658"/>
<dbReference type="OpenTargets" id="ENSG00000166979"/>
<dbReference type="PharmGKB" id="PA25858"/>
<dbReference type="VEuPathDB" id="HostDB:ENSG00000166979"/>
<dbReference type="eggNOG" id="KOG4729">
    <property type="taxonomic scope" value="Eukaryota"/>
</dbReference>
<dbReference type="GeneTree" id="ENSGT00940000162103"/>
<dbReference type="HOGENOM" id="CLU_050537_0_1_1"/>
<dbReference type="InParanoid" id="P58658"/>
<dbReference type="OMA" id="HKRHVAC"/>
<dbReference type="OrthoDB" id="5970528at2759"/>
<dbReference type="PAN-GO" id="P58658">
    <property type="GO annotations" value="2 GO annotations based on evolutionary models"/>
</dbReference>
<dbReference type="PhylomeDB" id="P58658"/>
<dbReference type="TreeFam" id="TF328177"/>
<dbReference type="PathwayCommons" id="P58658"/>
<dbReference type="SignaLink" id="P58658"/>
<dbReference type="BioGRID-ORCS" id="59271">
    <property type="hits" value="8 hits in 1134 CRISPR screens"/>
</dbReference>
<dbReference type="ChiTaRS" id="EVA1C">
    <property type="organism name" value="human"/>
</dbReference>
<dbReference type="GenomeRNAi" id="59271"/>
<dbReference type="Pharos" id="P58658">
    <property type="development level" value="Tbio"/>
</dbReference>
<dbReference type="PRO" id="PR:P58658"/>
<dbReference type="Proteomes" id="UP000005640">
    <property type="component" value="Chromosome 21"/>
</dbReference>
<dbReference type="RNAct" id="P58658">
    <property type="molecule type" value="protein"/>
</dbReference>
<dbReference type="Bgee" id="ENSG00000166979">
    <property type="expression patterns" value="Expressed in olfactory segment of nasal mucosa and 167 other cell types or tissues"/>
</dbReference>
<dbReference type="ExpressionAtlas" id="P58658">
    <property type="expression patterns" value="baseline and differential"/>
</dbReference>
<dbReference type="GO" id="GO:0016020">
    <property type="term" value="C:membrane"/>
    <property type="evidence" value="ECO:0007669"/>
    <property type="project" value="UniProtKB-SubCell"/>
</dbReference>
<dbReference type="GO" id="GO:0030246">
    <property type="term" value="F:carbohydrate binding"/>
    <property type="evidence" value="ECO:0007669"/>
    <property type="project" value="UniProtKB-KW"/>
</dbReference>
<dbReference type="GO" id="GO:0008201">
    <property type="term" value="F:heparin binding"/>
    <property type="evidence" value="ECO:0000315"/>
    <property type="project" value="UniProtKB"/>
</dbReference>
<dbReference type="CDD" id="cd22828">
    <property type="entry name" value="Gal_Rha_Lectin_EVA1_EVA1C_rpt1"/>
    <property type="match status" value="1"/>
</dbReference>
<dbReference type="CDD" id="cd22829">
    <property type="entry name" value="Gal_Rha_Lectin_EVA1_EVA1C_rpt2"/>
    <property type="match status" value="1"/>
</dbReference>
<dbReference type="FunFam" id="2.60.120.740:FF:000003">
    <property type="entry name" value="Protein eva-1 homolog C"/>
    <property type="match status" value="1"/>
</dbReference>
<dbReference type="FunFam" id="2.60.120.740:FF:000004">
    <property type="entry name" value="Protein eva-1 homolog C"/>
    <property type="match status" value="1"/>
</dbReference>
<dbReference type="Gene3D" id="2.60.120.740">
    <property type="match status" value="2"/>
</dbReference>
<dbReference type="InterPro" id="IPR039500">
    <property type="entry name" value="EVA1_dom"/>
</dbReference>
<dbReference type="InterPro" id="IPR000922">
    <property type="entry name" value="Lectin_gal-bd_dom"/>
</dbReference>
<dbReference type="InterPro" id="IPR043159">
    <property type="entry name" value="Lectin_gal-bd_sf"/>
</dbReference>
<dbReference type="PANTHER" id="PTHR46780">
    <property type="entry name" value="PROTEIN EVA-1"/>
    <property type="match status" value="1"/>
</dbReference>
<dbReference type="Pfam" id="PF14851">
    <property type="entry name" value="FAM176"/>
    <property type="match status" value="1"/>
</dbReference>
<dbReference type="Pfam" id="PF02140">
    <property type="entry name" value="SUEL_Lectin"/>
    <property type="match status" value="2"/>
</dbReference>
<dbReference type="PROSITE" id="PS50228">
    <property type="entry name" value="SUEL_LECTIN"/>
    <property type="match status" value="2"/>
</dbReference>
<sequence length="441" mass="49483">MLLPGRARQPPTPQPVQHPGLRRQVEPPGQLLRLFYCTVLVCSKEISALTDFSGYLTKLLQNHTTYACDGDYLNLQCPRHSTISVQSAFYGQDYQMCSSQKPASQREDSLTCVAATTFQKVLDECQNQRACHLLVNSRVFGPDLCPGSSKYLLVSFKCQPNELKNKTVCEDQELKLHCHESKFLNIYSATYGRRTQERDICSSKAERLPPFDCLSYSALQVLSRRCYGKQRCKIIVNNHHFGSPCLPGVKKYLTVTYACVPKNILTAIDPAIANLKPSLKQKDGEYGINFDPSGSKVLRKDGILVSNSLAAFAYIRAHPERAALLFVSSVCIGLALTLCALVIRESCAKDFRDLQLGREQLVPGSDKVEEDSEDEEEEEDPSESDFPGELSGFCRTSYPIYSSIEAAELAERIERREQIIQEIWMNSGLDTSLPRNMGQFY</sequence>
<accession>P58658</accession>
<accession>A6ND58</accession>
<accession>Q8IXZ0</accession>
<protein>
    <recommendedName>
        <fullName>Protein eva-1 homolog C</fullName>
    </recommendedName>
    <alternativeName>
        <fullName>Protein FAM176C</fullName>
    </alternativeName>
    <alternativeName>
        <fullName>SUE21</fullName>
    </alternativeName>
</protein>
<keyword id="KW-0025">Alternative splicing</keyword>
<keyword id="KW-0325">Glycoprotein</keyword>
<keyword id="KW-0430">Lectin</keyword>
<keyword id="KW-0472">Membrane</keyword>
<keyword id="KW-1267">Proteomics identification</keyword>
<keyword id="KW-1185">Reference proteome</keyword>
<keyword id="KW-0677">Repeat</keyword>
<keyword id="KW-0732">Signal</keyword>
<keyword id="KW-0812">Transmembrane</keyword>
<keyword id="KW-1133">Transmembrane helix</keyword>